<feature type="chain" id="PRO_1000089480" description="Octanoyltransferase">
    <location>
        <begin position="1"/>
        <end position="228"/>
    </location>
</feature>
<feature type="domain" description="BPL/LPL catalytic" evidence="2">
    <location>
        <begin position="31"/>
        <end position="212"/>
    </location>
</feature>
<feature type="active site" description="Acyl-thioester intermediate" evidence="1">
    <location>
        <position position="174"/>
    </location>
</feature>
<feature type="binding site" evidence="1">
    <location>
        <begin position="76"/>
        <end position="83"/>
    </location>
    <ligand>
        <name>substrate</name>
    </ligand>
</feature>
<feature type="binding site" evidence="1">
    <location>
        <begin position="143"/>
        <end position="145"/>
    </location>
    <ligand>
        <name>substrate</name>
    </ligand>
</feature>
<feature type="binding site" evidence="1">
    <location>
        <begin position="156"/>
        <end position="158"/>
    </location>
    <ligand>
        <name>substrate</name>
    </ligand>
</feature>
<feature type="site" description="Lowers pKa of active site Cys" evidence="1">
    <location>
        <position position="140"/>
    </location>
</feature>
<protein>
    <recommendedName>
        <fullName evidence="1">Octanoyltransferase</fullName>
        <ecNumber evidence="1">2.3.1.181</ecNumber>
    </recommendedName>
    <alternativeName>
        <fullName evidence="1">Lipoate-protein ligase B</fullName>
    </alternativeName>
    <alternativeName>
        <fullName evidence="1">Lipoyl/octanoyl transferase</fullName>
    </alternativeName>
    <alternativeName>
        <fullName evidence="1">Octanoyl-[acyl-carrier-protein]-protein N-octanoyltransferase</fullName>
    </alternativeName>
</protein>
<evidence type="ECO:0000255" key="1">
    <source>
        <dbReference type="HAMAP-Rule" id="MF_00013"/>
    </source>
</evidence>
<evidence type="ECO:0000255" key="2">
    <source>
        <dbReference type="PROSITE-ProRule" id="PRU01067"/>
    </source>
</evidence>
<keyword id="KW-0012">Acyltransferase</keyword>
<keyword id="KW-0963">Cytoplasm</keyword>
<keyword id="KW-0808">Transferase</keyword>
<accession>B0K3J8</accession>
<comment type="function">
    <text evidence="1">Catalyzes the transfer of endogenously produced octanoic acid from octanoyl-acyl-carrier-protein onto the lipoyl domains of lipoate-dependent enzymes. Lipoyl-ACP can also act as a substrate although octanoyl-ACP is likely to be the physiological substrate.</text>
</comment>
<comment type="catalytic activity">
    <reaction evidence="1">
        <text>octanoyl-[ACP] + L-lysyl-[protein] = N(6)-octanoyl-L-lysyl-[protein] + holo-[ACP] + H(+)</text>
        <dbReference type="Rhea" id="RHEA:17665"/>
        <dbReference type="Rhea" id="RHEA-COMP:9636"/>
        <dbReference type="Rhea" id="RHEA-COMP:9685"/>
        <dbReference type="Rhea" id="RHEA-COMP:9752"/>
        <dbReference type="Rhea" id="RHEA-COMP:9928"/>
        <dbReference type="ChEBI" id="CHEBI:15378"/>
        <dbReference type="ChEBI" id="CHEBI:29969"/>
        <dbReference type="ChEBI" id="CHEBI:64479"/>
        <dbReference type="ChEBI" id="CHEBI:78463"/>
        <dbReference type="ChEBI" id="CHEBI:78809"/>
        <dbReference type="EC" id="2.3.1.181"/>
    </reaction>
</comment>
<comment type="pathway">
    <text evidence="1">Protein modification; protein lipoylation via endogenous pathway; protein N(6)-(lipoyl)lysine from octanoyl-[acyl-carrier-protein]: step 1/2.</text>
</comment>
<comment type="subcellular location">
    <subcellularLocation>
        <location evidence="1">Cytoplasm</location>
    </subcellularLocation>
</comment>
<comment type="miscellaneous">
    <text evidence="1">In the reaction, the free carboxyl group of octanoic acid is attached via an amide linkage to the epsilon-amino group of a specific lysine residue of lipoyl domains of lipoate-dependent enzymes.</text>
</comment>
<comment type="similarity">
    <text evidence="1">Belongs to the LipB family.</text>
</comment>
<gene>
    <name evidence="1" type="primary">lipB</name>
    <name type="ordered locus">Teth514_2037</name>
</gene>
<organism>
    <name type="scientific">Thermoanaerobacter sp. (strain X514)</name>
    <dbReference type="NCBI Taxonomy" id="399726"/>
    <lineage>
        <taxon>Bacteria</taxon>
        <taxon>Bacillati</taxon>
        <taxon>Bacillota</taxon>
        <taxon>Clostridia</taxon>
        <taxon>Thermoanaerobacterales</taxon>
        <taxon>Thermoanaerobacteraceae</taxon>
        <taxon>Thermoanaerobacter</taxon>
    </lineage>
</organism>
<sequence length="228" mass="25684">MRKGEVLKLGIVPYMEGKEIQLKAFERVKKGETDGILILLQHPPVYTIGVSGGFDENILVPLAELKKKAELYKVERGGKITFHGPGQIVAYPIFNLAKWQKDVHLFVYKLEETIIKLLEEYGIKAGRKPKYTGVWVGDEKICAIGIAVRRWITWHGIAFNVNTDLSYFGLINACGITEFGVTSMQKLGINEDIEKVKEKMVDKFSEVFGIHFSEITLDRLAVIDNAKA</sequence>
<reference key="1">
    <citation type="submission" date="2008-01" db="EMBL/GenBank/DDBJ databases">
        <title>Complete sequence of Thermoanaerobacter sp. X514.</title>
        <authorList>
            <consortium name="US DOE Joint Genome Institute"/>
            <person name="Copeland A."/>
            <person name="Lucas S."/>
            <person name="Lapidus A."/>
            <person name="Barry K."/>
            <person name="Glavina del Rio T."/>
            <person name="Dalin E."/>
            <person name="Tice H."/>
            <person name="Pitluck S."/>
            <person name="Bruce D."/>
            <person name="Goodwin L."/>
            <person name="Saunders E."/>
            <person name="Brettin T."/>
            <person name="Detter J.C."/>
            <person name="Han C."/>
            <person name="Schmutz J."/>
            <person name="Larimer F."/>
            <person name="Land M."/>
            <person name="Hauser L."/>
            <person name="Kyrpides N."/>
            <person name="Kim E."/>
            <person name="Hemme C."/>
            <person name="Fields M.W."/>
            <person name="He Z."/>
            <person name="Zhou J."/>
            <person name="Richardson P."/>
        </authorList>
    </citation>
    <scope>NUCLEOTIDE SEQUENCE [LARGE SCALE GENOMIC DNA]</scope>
    <source>
        <strain>X514</strain>
    </source>
</reference>
<name>LIPB_THEPX</name>
<proteinExistence type="inferred from homology"/>
<dbReference type="EC" id="2.3.1.181" evidence="1"/>
<dbReference type="EMBL" id="CP000923">
    <property type="protein sequence ID" value="ABY93309.1"/>
    <property type="molecule type" value="Genomic_DNA"/>
</dbReference>
<dbReference type="RefSeq" id="WP_003867258.1">
    <property type="nucleotide sequence ID" value="NC_010320.1"/>
</dbReference>
<dbReference type="SMR" id="B0K3J8"/>
<dbReference type="KEGG" id="tex:Teth514_2037"/>
<dbReference type="HOGENOM" id="CLU_035168_1_3_9"/>
<dbReference type="UniPathway" id="UPA00538">
    <property type="reaction ID" value="UER00592"/>
</dbReference>
<dbReference type="Proteomes" id="UP000002155">
    <property type="component" value="Chromosome"/>
</dbReference>
<dbReference type="GO" id="GO:0005737">
    <property type="term" value="C:cytoplasm"/>
    <property type="evidence" value="ECO:0007669"/>
    <property type="project" value="UniProtKB-SubCell"/>
</dbReference>
<dbReference type="GO" id="GO:0033819">
    <property type="term" value="F:lipoyl(octanoyl) transferase activity"/>
    <property type="evidence" value="ECO:0007669"/>
    <property type="project" value="UniProtKB-EC"/>
</dbReference>
<dbReference type="GO" id="GO:0036211">
    <property type="term" value="P:protein modification process"/>
    <property type="evidence" value="ECO:0007669"/>
    <property type="project" value="InterPro"/>
</dbReference>
<dbReference type="CDD" id="cd16444">
    <property type="entry name" value="LipB"/>
    <property type="match status" value="1"/>
</dbReference>
<dbReference type="Gene3D" id="3.30.930.10">
    <property type="entry name" value="Bira Bifunctional Protein, Domain 2"/>
    <property type="match status" value="1"/>
</dbReference>
<dbReference type="HAMAP" id="MF_00013">
    <property type="entry name" value="LipB"/>
    <property type="match status" value="1"/>
</dbReference>
<dbReference type="InterPro" id="IPR045864">
    <property type="entry name" value="aa-tRNA-synth_II/BPL/LPL"/>
</dbReference>
<dbReference type="InterPro" id="IPR004143">
    <property type="entry name" value="BPL_LPL_catalytic"/>
</dbReference>
<dbReference type="InterPro" id="IPR000544">
    <property type="entry name" value="Octanoyltransferase"/>
</dbReference>
<dbReference type="InterPro" id="IPR020605">
    <property type="entry name" value="Octanoyltransferase_CS"/>
</dbReference>
<dbReference type="NCBIfam" id="TIGR00214">
    <property type="entry name" value="lipB"/>
    <property type="match status" value="1"/>
</dbReference>
<dbReference type="NCBIfam" id="NF010925">
    <property type="entry name" value="PRK14345.1"/>
    <property type="match status" value="1"/>
</dbReference>
<dbReference type="PANTHER" id="PTHR10993:SF7">
    <property type="entry name" value="LIPOYLTRANSFERASE 2, MITOCHONDRIAL-RELATED"/>
    <property type="match status" value="1"/>
</dbReference>
<dbReference type="PANTHER" id="PTHR10993">
    <property type="entry name" value="OCTANOYLTRANSFERASE"/>
    <property type="match status" value="1"/>
</dbReference>
<dbReference type="Pfam" id="PF21948">
    <property type="entry name" value="LplA-B_cat"/>
    <property type="match status" value="1"/>
</dbReference>
<dbReference type="PIRSF" id="PIRSF016262">
    <property type="entry name" value="LPLase"/>
    <property type="match status" value="1"/>
</dbReference>
<dbReference type="SUPFAM" id="SSF55681">
    <property type="entry name" value="Class II aaRS and biotin synthetases"/>
    <property type="match status" value="1"/>
</dbReference>
<dbReference type="PROSITE" id="PS51733">
    <property type="entry name" value="BPL_LPL_CATALYTIC"/>
    <property type="match status" value="1"/>
</dbReference>
<dbReference type="PROSITE" id="PS01313">
    <property type="entry name" value="LIPB"/>
    <property type="match status" value="1"/>
</dbReference>